<sequence>MMKIKIIFSYDGSAFLGSASQPHKKGVQDALSGALSHLGIVSPLLMASRTDKGVHASYAVASVGCGDHFVNLEYLQKQLNKFSHPFIHIKKIEKVKDDFEVRFDVKSREYRYIFSHSSYSPFMASYVHFYPKFDLDKANELLGFFVGKKDLKFFCKSGGDNKTTLREIFIARAYAYKDFSIFHFKANGFLRGQIRLSVASVLKVLEGKMSEKELKEQIEAKKQYNHFLAPPNGLYLSRICY</sequence>
<evidence type="ECO:0000255" key="1">
    <source>
        <dbReference type="HAMAP-Rule" id="MF_00171"/>
    </source>
</evidence>
<dbReference type="EC" id="5.4.99.12" evidence="1"/>
<dbReference type="EMBL" id="CP000538">
    <property type="protein sequence ID" value="EAQ72335.2"/>
    <property type="molecule type" value="Genomic_DNA"/>
</dbReference>
<dbReference type="SMR" id="A1VZH1"/>
<dbReference type="KEGG" id="cjj:CJJ81176_0844"/>
<dbReference type="eggNOG" id="COG0101">
    <property type="taxonomic scope" value="Bacteria"/>
</dbReference>
<dbReference type="HOGENOM" id="CLU_014673_0_1_7"/>
<dbReference type="Proteomes" id="UP000000646">
    <property type="component" value="Chromosome"/>
</dbReference>
<dbReference type="GO" id="GO:0003723">
    <property type="term" value="F:RNA binding"/>
    <property type="evidence" value="ECO:0007669"/>
    <property type="project" value="InterPro"/>
</dbReference>
<dbReference type="GO" id="GO:0160147">
    <property type="term" value="F:tRNA pseudouridine(38-40) synthase activity"/>
    <property type="evidence" value="ECO:0007669"/>
    <property type="project" value="UniProtKB-EC"/>
</dbReference>
<dbReference type="GO" id="GO:0031119">
    <property type="term" value="P:tRNA pseudouridine synthesis"/>
    <property type="evidence" value="ECO:0007669"/>
    <property type="project" value="UniProtKB-UniRule"/>
</dbReference>
<dbReference type="CDD" id="cd02570">
    <property type="entry name" value="PseudoU_synth_EcTruA"/>
    <property type="match status" value="1"/>
</dbReference>
<dbReference type="Gene3D" id="3.30.70.660">
    <property type="entry name" value="Pseudouridine synthase I, catalytic domain, C-terminal subdomain"/>
    <property type="match status" value="1"/>
</dbReference>
<dbReference type="Gene3D" id="3.30.70.580">
    <property type="entry name" value="Pseudouridine synthase I, catalytic domain, N-terminal subdomain"/>
    <property type="match status" value="1"/>
</dbReference>
<dbReference type="HAMAP" id="MF_00171">
    <property type="entry name" value="TruA"/>
    <property type="match status" value="1"/>
</dbReference>
<dbReference type="InterPro" id="IPR020103">
    <property type="entry name" value="PsdUridine_synth_cat_dom_sf"/>
</dbReference>
<dbReference type="InterPro" id="IPR001406">
    <property type="entry name" value="PsdUridine_synth_TruA"/>
</dbReference>
<dbReference type="InterPro" id="IPR020097">
    <property type="entry name" value="PsdUridine_synth_TruA_a/b_dom"/>
</dbReference>
<dbReference type="InterPro" id="IPR020095">
    <property type="entry name" value="PsdUridine_synth_TruA_C"/>
</dbReference>
<dbReference type="InterPro" id="IPR020094">
    <property type="entry name" value="TruA/RsuA/RluB/E/F_N"/>
</dbReference>
<dbReference type="NCBIfam" id="TIGR00071">
    <property type="entry name" value="hisT_truA"/>
    <property type="match status" value="1"/>
</dbReference>
<dbReference type="PANTHER" id="PTHR11142">
    <property type="entry name" value="PSEUDOURIDYLATE SYNTHASE"/>
    <property type="match status" value="1"/>
</dbReference>
<dbReference type="PANTHER" id="PTHR11142:SF0">
    <property type="entry name" value="TRNA PSEUDOURIDINE SYNTHASE-LIKE 1"/>
    <property type="match status" value="1"/>
</dbReference>
<dbReference type="Pfam" id="PF01416">
    <property type="entry name" value="PseudoU_synth_1"/>
    <property type="match status" value="2"/>
</dbReference>
<dbReference type="PIRSF" id="PIRSF001430">
    <property type="entry name" value="tRNA_psdUrid_synth"/>
    <property type="match status" value="1"/>
</dbReference>
<dbReference type="SUPFAM" id="SSF55120">
    <property type="entry name" value="Pseudouridine synthase"/>
    <property type="match status" value="1"/>
</dbReference>
<gene>
    <name evidence="1" type="primary">truA</name>
    <name type="ordered locus">CJJ81176_0844</name>
</gene>
<comment type="function">
    <text evidence="1">Formation of pseudouridine at positions 38, 39 and 40 in the anticodon stem and loop of transfer RNAs.</text>
</comment>
<comment type="catalytic activity">
    <reaction evidence="1">
        <text>uridine(38/39/40) in tRNA = pseudouridine(38/39/40) in tRNA</text>
        <dbReference type="Rhea" id="RHEA:22376"/>
        <dbReference type="Rhea" id="RHEA-COMP:10085"/>
        <dbReference type="Rhea" id="RHEA-COMP:10087"/>
        <dbReference type="ChEBI" id="CHEBI:65314"/>
        <dbReference type="ChEBI" id="CHEBI:65315"/>
        <dbReference type="EC" id="5.4.99.12"/>
    </reaction>
</comment>
<comment type="subunit">
    <text evidence="1">Homodimer.</text>
</comment>
<comment type="similarity">
    <text evidence="1">Belongs to the tRNA pseudouridine synthase TruA family.</text>
</comment>
<keyword id="KW-0413">Isomerase</keyword>
<keyword id="KW-0819">tRNA processing</keyword>
<proteinExistence type="inferred from homology"/>
<accession>A1VZH1</accession>
<protein>
    <recommendedName>
        <fullName evidence="1">tRNA pseudouridine synthase A</fullName>
        <ecNumber evidence="1">5.4.99.12</ecNumber>
    </recommendedName>
    <alternativeName>
        <fullName evidence="1">tRNA pseudouridine(38-40) synthase</fullName>
    </alternativeName>
    <alternativeName>
        <fullName evidence="1">tRNA pseudouridylate synthase I</fullName>
    </alternativeName>
    <alternativeName>
        <fullName evidence="1">tRNA-uridine isomerase I</fullName>
    </alternativeName>
</protein>
<name>TRUA_CAMJJ</name>
<feature type="chain" id="PRO_1000017065" description="tRNA pseudouridine synthase A">
    <location>
        <begin position="1"/>
        <end position="241"/>
    </location>
</feature>
<feature type="active site" description="Nucleophile" evidence="1">
    <location>
        <position position="51"/>
    </location>
</feature>
<feature type="binding site" evidence="1">
    <location>
        <position position="110"/>
    </location>
    <ligand>
        <name>substrate</name>
    </ligand>
</feature>
<organism>
    <name type="scientific">Campylobacter jejuni subsp. jejuni serotype O:23/36 (strain 81-176)</name>
    <dbReference type="NCBI Taxonomy" id="354242"/>
    <lineage>
        <taxon>Bacteria</taxon>
        <taxon>Pseudomonadati</taxon>
        <taxon>Campylobacterota</taxon>
        <taxon>Epsilonproteobacteria</taxon>
        <taxon>Campylobacterales</taxon>
        <taxon>Campylobacteraceae</taxon>
        <taxon>Campylobacter</taxon>
    </lineage>
</organism>
<reference key="1">
    <citation type="submission" date="2006-12" db="EMBL/GenBank/DDBJ databases">
        <authorList>
            <person name="Fouts D.E."/>
            <person name="Nelson K.E."/>
            <person name="Sebastian Y."/>
        </authorList>
    </citation>
    <scope>NUCLEOTIDE SEQUENCE [LARGE SCALE GENOMIC DNA]</scope>
    <source>
        <strain>81-176</strain>
    </source>
</reference>